<accession>A0A345BJP5</accession>
<evidence type="ECO:0000250" key="1">
    <source>
        <dbReference type="UniProtKB" id="A0A3G1DJI3"/>
    </source>
</evidence>
<evidence type="ECO:0000255" key="2"/>
<evidence type="ECO:0000255" key="3">
    <source>
        <dbReference type="PROSITE-ProRule" id="PRU00498"/>
    </source>
</evidence>
<evidence type="ECO:0000269" key="4">
    <source>
    </source>
</evidence>
<evidence type="ECO:0000303" key="5">
    <source>
    </source>
</evidence>
<evidence type="ECO:0000305" key="6"/>
<evidence type="ECO:0000305" key="7">
    <source>
    </source>
</evidence>
<organism>
    <name type="scientific">Cochliobolus lunatus</name>
    <name type="common">Filamentous fungus</name>
    <name type="synonym">Curvularia lunata</name>
    <dbReference type="NCBI Taxonomy" id="5503"/>
    <lineage>
        <taxon>Eukaryota</taxon>
        <taxon>Fungi</taxon>
        <taxon>Dikarya</taxon>
        <taxon>Ascomycota</taxon>
        <taxon>Pezizomycotina</taxon>
        <taxon>Dothideomycetes</taxon>
        <taxon>Pleosporomycetidae</taxon>
        <taxon>Pleosporales</taxon>
        <taxon>Pleosporineae</taxon>
        <taxon>Pleosporaceae</taxon>
        <taxon>Curvularia</taxon>
    </lineage>
</organism>
<gene>
    <name evidence="5" type="primary">clz13</name>
</gene>
<name>CLZ13_COCLU</name>
<feature type="signal peptide" evidence="2">
    <location>
        <begin position="1"/>
        <end position="25"/>
    </location>
</feature>
<feature type="chain" id="PRO_5016566148" description="Probable hydrolase clz13">
    <location>
        <begin position="26"/>
        <end position="613"/>
    </location>
</feature>
<feature type="glycosylation site" description="N-linked (GlcNAc...) asparagine" evidence="3">
    <location>
        <position position="61"/>
    </location>
</feature>
<feature type="glycosylation site" description="N-linked (GlcNAc...) asparagine" evidence="3">
    <location>
        <position position="89"/>
    </location>
</feature>
<feature type="glycosylation site" description="N-linked (GlcNAc...) asparagine" evidence="3">
    <location>
        <position position="286"/>
    </location>
</feature>
<feature type="glycosylation site" description="N-linked (GlcNAc...) asparagine" evidence="3">
    <location>
        <position position="422"/>
    </location>
</feature>
<feature type="glycosylation site" description="N-linked (GlcNAc...) asparagine" evidence="3">
    <location>
        <position position="456"/>
    </location>
</feature>
<feature type="glycosylation site" description="N-linked (GlcNAc...) asparagine" evidence="3">
    <location>
        <position position="477"/>
    </location>
</feature>
<feature type="glycosylation site" description="N-linked (GlcNAc...) asparagine" evidence="3">
    <location>
        <position position="581"/>
    </location>
</feature>
<proteinExistence type="evidence at protein level"/>
<comment type="function">
    <text evidence="1 4 7">Probable hydrolase; part of the gene cluster that mediates the biosynthesis of squalestatin S1 (SQS1, also known as zaragozic acid A), a heavily oxidized fungal polyketide that offers potent cholesterol lowering activity by targeting squalene synthase (SS) (PubMed:28605916). SQS1 is composed of a 2,8-dioxobicyclic[3.2.1]octane-3,4,5-tricarboxyclic acid core that is connected to two lipophilic polyketide arms (PubMed:28605916). These initial steps feature the priming of an unusual benzoic acid starter unit onto the highly reducing polyketide synthase clz14, followed by oxaloacetate extension and product release to generate a tricarboxylic acid containing product (PubMed:28605916). The phenylalanine ammonia lyase (PAL) clz10 and the acyl-CoA ligase clz12 are involved in transforming phenylalanine into benzoyl-CoA (PubMed:28605916). The citrate synthase-like protein clz17 is involved in connecting the C-alpha-carbons of the hexaketide chain and oxaloacetate to afford the tricarboxylic acid unit (PubMed:28605916). The potential hydrolytic enzymes, clz11 and clz13, are in close proximity to pks2 and may participate in product release (PubMed:28605916). On the other side, the tetraketide arm is synthesized by a the squalestatin tetraketide synthase clz2 and enzymatically esterified to the core in the last biosynthetic step, by the acetyltransferase clz6 (By similarity). The biosynthesis of the tetraketide must involve 3 rounds of chain extension (By similarity). After the first and second rounds methyl-transfer occurs, and in all rounds of extension the ketoreductase and dehydratase are active (By similarity). The enoyl reductase and C-MeT of clz2 are not active in the final round of extension (By similarity). The acetyltransferase clz6 appears to have a broad substrate selectivity for its acyl CoA substrate, allowing the in vitro synthesis of novel squalestatins (By similarity). The biosynthesis of SQS1 requires several oxidative steps likely performed by oxidoreductases clz3, clz15 and clz16 (Probable). Finally, in support of the identification of the cluster as being responsible for SQS1 production, the cluster contains a gene encoding a putative squalene synthase (SS) clz20, suggesting a likely mechanism for self-resistance (Probable).</text>
</comment>
<comment type="pathway">
    <text evidence="4">Secondary metabolite biosynthesis.</text>
</comment>
<comment type="similarity">
    <text evidence="6">Belongs to the beta-lactamase family.</text>
</comment>
<sequence>MCLLSMRFTVAILLVLLSHCGGSHATSCTPGQPFPVPSYPESSLQETFEHIFETASGYFENESFQATNVAIEVTSSRETLWSFYHAAKNQSSQDGSTVIGKDTVFRVARVSKLLTAIAVLQLHDQGHVSSLYDPINDYIPDLEPSSVQWDRVTIWDLLNNVAGILDMCSYTLFDKRLNTNSDFTIDGYADIYMDFSARQKADLNLPPVSDAILEVMPACQVDKSIPCDSAGLLSWLRSSKAVFNPHQVNSNSNVGFSLLGILIERISGVKYEQFIHQTIIEPLQLNSTSFRPPHKDSGAVLQNDHTWSWDVGVNNPSVGLYSTPCDISTLLRWTLNKSPSSILNWFAPGFYAVGSHSLIGMPWNIFRTTTPLSIPNRPTTFNTVVGTLGPYTSVVVVMPEYDLAVSLMMNGALGHPHDILTNVTFPLIRAADKIALESVQDNYAGTYKAEPGQKINSSITLSVSSDHGLRISELISNGSSILPVMERLASSKSGGGANWIFQAVPTFLDSKHQGRRGDGVIVDEEWRWTYVLDKPPGEGWNDWCLSSFDPVTYAGEPLTKMVFHKDAKSGRVLSVALSGYNITLTKAVQEADSFAQGDALDLLAHAGQEVLAE</sequence>
<keyword id="KW-0325">Glycoprotein</keyword>
<keyword id="KW-0378">Hydrolase</keyword>
<keyword id="KW-0732">Signal</keyword>
<protein>
    <recommendedName>
        <fullName evidence="5">Probable hydrolase clz13</fullName>
        <ecNumber>3.5.-.-</ecNumber>
    </recommendedName>
    <alternativeName>
        <fullName evidence="5">Squalestatin S1 biosynthesis cluster protein clz13</fullName>
    </alternativeName>
    <alternativeName>
        <fullName evidence="5">Zaragozic acid A biosynthesis cluster protein 13</fullName>
    </alternativeName>
</protein>
<reference key="1">
    <citation type="journal article" date="2017" name="Org. Lett.">
        <title>Identification and heterologous production of a benzoyl-primed tricarboxylic acid polyketide intermediate from the zaragozic acid A biosynthetic pathway.</title>
        <authorList>
            <person name="Liu N."/>
            <person name="Hung Y.S."/>
            <person name="Gao S.S."/>
            <person name="Hang L."/>
            <person name="Zou Y."/>
            <person name="Chooi Y.H."/>
            <person name="Tang Y."/>
        </authorList>
    </citation>
    <scope>NUCLEOTIDE SEQUENCE [GENOMIC DNA]</scope>
    <scope>FUNCTION</scope>
    <scope>CATALYTIC ACTIVITY</scope>
    <scope>PATHWAY</scope>
    <source>
        <strain>ATCC 74067</strain>
    </source>
</reference>
<dbReference type="EC" id="3.5.-.-"/>
<dbReference type="EMBL" id="MF806533">
    <property type="protein sequence ID" value="AXF50658.1"/>
    <property type="molecule type" value="Genomic_DNA"/>
</dbReference>
<dbReference type="SMR" id="A0A345BJP5"/>
<dbReference type="GlyCosmos" id="A0A345BJP5">
    <property type="glycosylation" value="7 sites, No reported glycans"/>
</dbReference>
<dbReference type="GO" id="GO:0016787">
    <property type="term" value="F:hydrolase activity"/>
    <property type="evidence" value="ECO:0007669"/>
    <property type="project" value="UniProtKB-KW"/>
</dbReference>
<dbReference type="Gene3D" id="3.40.710.10">
    <property type="entry name" value="DD-peptidase/beta-lactamase superfamily"/>
    <property type="match status" value="1"/>
</dbReference>
<dbReference type="InterPro" id="IPR001466">
    <property type="entry name" value="Beta-lactam-related"/>
</dbReference>
<dbReference type="InterPro" id="IPR012338">
    <property type="entry name" value="Beta-lactam/transpept-like"/>
</dbReference>
<dbReference type="InterPro" id="IPR051478">
    <property type="entry name" value="Beta-lactamase-like_AB/R"/>
</dbReference>
<dbReference type="PANTHER" id="PTHR22935:SF95">
    <property type="entry name" value="BETA-LACTAMASE-LIKE 1-RELATED"/>
    <property type="match status" value="1"/>
</dbReference>
<dbReference type="PANTHER" id="PTHR22935">
    <property type="entry name" value="PENICILLIN-BINDING PROTEIN"/>
    <property type="match status" value="1"/>
</dbReference>
<dbReference type="Pfam" id="PF00144">
    <property type="entry name" value="Beta-lactamase"/>
    <property type="match status" value="1"/>
</dbReference>
<dbReference type="SUPFAM" id="SSF56601">
    <property type="entry name" value="beta-lactamase/transpeptidase-like"/>
    <property type="match status" value="1"/>
</dbReference>